<name>DNMT1_PARLI</name>
<feature type="chain" id="PRO_0000088038" description="DNA (cytosine-5)-methyltransferase PliMCI">
    <location>
        <begin position="1"/>
        <end position="1612"/>
    </location>
</feature>
<feature type="domain" description="DMAP1-binding" evidence="7">
    <location>
        <begin position="7"/>
        <end position="101"/>
    </location>
</feature>
<feature type="domain" description="BAH 1" evidence="4">
    <location>
        <begin position="743"/>
        <end position="871"/>
    </location>
</feature>
<feature type="domain" description="BAH 2" evidence="4">
    <location>
        <begin position="967"/>
        <end position="1089"/>
    </location>
</feature>
<feature type="domain" description="SAM-dependent MTase C5-type" evidence="6">
    <location>
        <begin position="1131"/>
        <end position="1590"/>
    </location>
</feature>
<feature type="zinc finger region" description="CXXC-type" evidence="5">
    <location>
        <begin position="626"/>
        <end position="672"/>
    </location>
</feature>
<feature type="region of interest" description="Disordered" evidence="9">
    <location>
        <begin position="87"/>
        <end position="338"/>
    </location>
</feature>
<feature type="region of interest" description="Disordered" evidence="9">
    <location>
        <begin position="677"/>
        <end position="708"/>
    </location>
</feature>
<feature type="region of interest" description="Disordered" evidence="9">
    <location>
        <begin position="1084"/>
        <end position="1121"/>
    </location>
</feature>
<feature type="compositionally biased region" description="Basic and acidic residues" evidence="9">
    <location>
        <begin position="94"/>
        <end position="110"/>
    </location>
</feature>
<feature type="compositionally biased region" description="Low complexity" evidence="9">
    <location>
        <begin position="115"/>
        <end position="131"/>
    </location>
</feature>
<feature type="compositionally biased region" description="Polar residues" evidence="9">
    <location>
        <begin position="132"/>
        <end position="142"/>
    </location>
</feature>
<feature type="compositionally biased region" description="Low complexity" evidence="9">
    <location>
        <begin position="143"/>
        <end position="154"/>
    </location>
</feature>
<feature type="compositionally biased region" description="Basic and acidic residues" evidence="9">
    <location>
        <begin position="193"/>
        <end position="212"/>
    </location>
</feature>
<feature type="compositionally biased region" description="Basic and acidic residues" evidence="9">
    <location>
        <begin position="222"/>
        <end position="232"/>
    </location>
</feature>
<feature type="compositionally biased region" description="Basic and acidic residues" evidence="9">
    <location>
        <begin position="260"/>
        <end position="289"/>
    </location>
</feature>
<feature type="compositionally biased region" description="Acidic residues" evidence="9">
    <location>
        <begin position="678"/>
        <end position="688"/>
    </location>
</feature>
<feature type="compositionally biased region" description="Basic and acidic residues" evidence="9">
    <location>
        <begin position="691"/>
        <end position="708"/>
    </location>
</feature>
<feature type="compositionally biased region" description="Basic residues" evidence="9">
    <location>
        <begin position="1093"/>
        <end position="1111"/>
    </location>
</feature>
<feature type="active site" evidence="6 8">
    <location>
        <position position="1218"/>
    </location>
</feature>
<feature type="binding site" evidence="5">
    <location>
        <position position="633"/>
    </location>
    <ligand>
        <name>Zn(2+)</name>
        <dbReference type="ChEBI" id="CHEBI:29105"/>
        <label>1</label>
    </ligand>
</feature>
<feature type="binding site" evidence="5">
    <location>
        <position position="636"/>
    </location>
    <ligand>
        <name>Zn(2+)</name>
        <dbReference type="ChEBI" id="CHEBI:29105"/>
        <label>1</label>
    </ligand>
</feature>
<feature type="binding site" evidence="5">
    <location>
        <position position="639"/>
    </location>
    <ligand>
        <name>Zn(2+)</name>
        <dbReference type="ChEBI" id="CHEBI:29105"/>
        <label>1</label>
    </ligand>
</feature>
<feature type="binding site" evidence="5">
    <location>
        <position position="644"/>
    </location>
    <ligand>
        <name>Zn(2+)</name>
        <dbReference type="ChEBI" id="CHEBI:29105"/>
        <label>2</label>
    </ligand>
</feature>
<feature type="binding site" evidence="5">
    <location>
        <position position="647"/>
    </location>
    <ligand>
        <name>Zn(2+)</name>
        <dbReference type="ChEBI" id="CHEBI:29105"/>
        <label>2</label>
    </ligand>
</feature>
<feature type="binding site" evidence="5">
    <location>
        <position position="650"/>
    </location>
    <ligand>
        <name>Zn(2+)</name>
        <dbReference type="ChEBI" id="CHEBI:29105"/>
        <label>2</label>
    </ligand>
</feature>
<feature type="binding site" evidence="5">
    <location>
        <position position="666"/>
    </location>
    <ligand>
        <name>Zn(2+)</name>
        <dbReference type="ChEBI" id="CHEBI:29105"/>
        <label>2</label>
    </ligand>
</feature>
<feature type="binding site" evidence="5">
    <location>
        <position position="671"/>
    </location>
    <ligand>
        <name>Zn(2+)</name>
        <dbReference type="ChEBI" id="CHEBI:29105"/>
        <label>1</label>
    </ligand>
</feature>
<feature type="binding site" evidence="2">
    <location>
        <begin position="1142"/>
        <end position="1143"/>
    </location>
    <ligand>
        <name>S-adenosyl-L-methionine</name>
        <dbReference type="ChEBI" id="CHEBI:59789"/>
    </ligand>
</feature>
<feature type="binding site" evidence="3">
    <location>
        <begin position="1160"/>
        <end position="1161"/>
    </location>
    <ligand>
        <name>S-adenosyl-L-methionine</name>
        <dbReference type="ChEBI" id="CHEBI:59789"/>
    </ligand>
</feature>
<feature type="binding site" evidence="2">
    <location>
        <begin position="1182"/>
        <end position="1183"/>
    </location>
    <ligand>
        <name>S-adenosyl-L-methionine</name>
        <dbReference type="ChEBI" id="CHEBI:59789"/>
    </ligand>
</feature>
<feature type="binding site" evidence="3">
    <location>
        <position position="1183"/>
    </location>
    <ligand>
        <name>S-adenosyl-L-methionine</name>
        <dbReference type="ChEBI" id="CHEBI:59789"/>
    </ligand>
</feature>
<feature type="binding site" evidence="3">
    <location>
        <position position="1569"/>
    </location>
    <ligand>
        <name>S-adenosyl-L-methionine</name>
        <dbReference type="ChEBI" id="CHEBI:59789"/>
    </ligand>
</feature>
<feature type="binding site" evidence="2">
    <location>
        <position position="1571"/>
    </location>
    <ligand>
        <name>S-adenosyl-L-methionine</name>
        <dbReference type="ChEBI" id="CHEBI:59789"/>
    </ligand>
</feature>
<organism>
    <name type="scientific">Paracentrotus lividus</name>
    <name type="common">Common sea urchin</name>
    <dbReference type="NCBI Taxonomy" id="7656"/>
    <lineage>
        <taxon>Eukaryota</taxon>
        <taxon>Metazoa</taxon>
        <taxon>Echinodermata</taxon>
        <taxon>Eleutherozoa</taxon>
        <taxon>Echinozoa</taxon>
        <taxon>Echinoidea</taxon>
        <taxon>Euechinoidea</taxon>
        <taxon>Echinacea</taxon>
        <taxon>Camarodonta</taxon>
        <taxon>Echinidea</taxon>
        <taxon>Echinidae</taxon>
        <taxon>Paracentrotus</taxon>
    </lineage>
</organism>
<sequence>MPSKTICDQVIPPNVRDRVQELDGDLNDGLITEKGYVKKKSKILFEHLSPDIQTKLKGLEDELKDEELTEKGYLNKVQSILAKFIETCSPVNGDTKEEASSNGKDDEKAESTVANGTTSNGSTTNGSSGSSKANGHTNGGYVQSSSQEETGTSQSEEEMDMDTPTSGKGGSKKKKKSKGSGGGDAGKGRKRKVLGDDERDGVEKKEGEKKDVEGEEGEEAKEESATPDEKTLRTSKRKRSPKADAKQPSIMSMFTKKPAKKEEEKMEESSSMEVDKKEMENGDNGKKEEEEPSGPGGKRIKKEEEEEEKAKVEPMSPSRDLRHKANHETAESKQPPLRCKECRQLLDDPDLKIFPGDPEDAREEYITLTDPRLSLLTGDEGDAMSYDERLQHKITNFCVYDKSTHICAFDRGMIEKNKELYFSGYVKPIYDDNPSTEGGIPTKRIGPINEWYTTGFDGGHKALIGFSTAFAEYIVMSPSEEYKPFWTAVQEKIYMSKILIEFLQNNVDPVYEDLLTQIETTVPPEGCNRFTEDSLLRHAQFVVEQVESYDDAADRDEVLLITMPCMRDLIKLAGVTLGKRRAARKAAAVKKDKKPVFTMATVTPLVSHIFDAIFKDQIADEMKAAASERKKRCGVCEICQAPDCGKCTACKDMIKFGGSGKAKQACKDRRCPNMAVQEADENDIDEMDNSSNKENKDEKKAKKGRKLETPLKKKKRAKVTWLDEPTEVTEERAYYKAAMLDDEKIEIGDCVLIHPDDPTKPLFMARVIYMWQESQGEMMFHAQWFVYGSETVLGETSDPLEVFPIDECQDTYLGSVNAKCTVIYKAPPNDWSMIGGIDDPETDHVIKEDDGKTFFYQKWYDPELARFEDYEVLMAPDDIPAHRFCSCCLKNERAQEKETARPGAKLEDQDDSSKVLYSSWHYKGNEFQIGDGVYLLPEVFSFNIKQKVVTKKPVSKKDVDEDLYPENYRKSSEYVKGSNLECPEPFRIGKIISIYTTKSNSTVRLRVNKMYRPEDTHKGRTAAYQADLNVLYWSEEEAVTELEVVQGKCSVVCAEDLNVSTDEYSAGGPHKFYFREAYDSERKCFEDPPSKSRSTRMKGKGKGKGKGKAKGKIAVEKEEEKESTETPFNKLKCLDVFAGCGGLSEGFHQAGICESSWAIEKEEPAAQAYRLNNPGSTVFSDDCNELLRLVMQGEKTSRTGQKLPQKGDVELLCGGPPCQGFSGMNRFNSREYSKFKNSLISSYLSYCDYYRPRFFLLENVRNFVSYKKNMVLKLALRCLIRMGYQCTFGILQAGQYGVPQTRRRAIILAAAPGEKLPFYPEPLHVFSSRACSLSVMIGEKKIESNNQWCLSAPYRTITVRDTMSDLPTINNGAQKLEISYDGEPQSDFQKKIRGNQYQPILRDHICKDMSSLVAARMKHIPLAPGSDWRDLPNIPVTLKDGTTCRKLRYTHKDKKNGKSSTGALRGVCSCAEGDACDPSDRQFSTLIPWCLPHTGNRHNNWAGLYGRLEWDGFFSTTVTNPEPMGKQGRVLHPEQHRVVSVRECARSQGFPDTYRFFGSILDKHRQIGNAVPPPMAAAIGMEIKVCLQTKTKRDQERAALEPVKEETEESMD</sequence>
<dbReference type="EC" id="2.1.1.37"/>
<dbReference type="EMBL" id="Z50183">
    <property type="protein sequence ID" value="CAA90563.1"/>
    <property type="molecule type" value="mRNA"/>
</dbReference>
<dbReference type="PIR" id="JC5210">
    <property type="entry name" value="JC5210"/>
</dbReference>
<dbReference type="SMR" id="Q27746"/>
<dbReference type="REBASE" id="2961">
    <property type="entry name" value="M.PliMCDnmt1"/>
</dbReference>
<dbReference type="GO" id="GO:0005634">
    <property type="term" value="C:nucleus"/>
    <property type="evidence" value="ECO:0007669"/>
    <property type="project" value="UniProtKB-SubCell"/>
</dbReference>
<dbReference type="GO" id="GO:0003682">
    <property type="term" value="F:chromatin binding"/>
    <property type="evidence" value="ECO:0007669"/>
    <property type="project" value="InterPro"/>
</dbReference>
<dbReference type="GO" id="GO:0003886">
    <property type="term" value="F:DNA (cytosine-5-)-methyltransferase activity"/>
    <property type="evidence" value="ECO:0007669"/>
    <property type="project" value="UniProtKB-EC"/>
</dbReference>
<dbReference type="GO" id="GO:0003677">
    <property type="term" value="F:DNA binding"/>
    <property type="evidence" value="ECO:0007669"/>
    <property type="project" value="UniProtKB-KW"/>
</dbReference>
<dbReference type="GO" id="GO:0008270">
    <property type="term" value="F:zinc ion binding"/>
    <property type="evidence" value="ECO:0007669"/>
    <property type="project" value="UniProtKB-KW"/>
</dbReference>
<dbReference type="GO" id="GO:0006346">
    <property type="term" value="P:DNA methylation-dependent constitutive heterochromatin formation"/>
    <property type="evidence" value="ECO:0007669"/>
    <property type="project" value="InterPro"/>
</dbReference>
<dbReference type="GO" id="GO:0032259">
    <property type="term" value="P:methylation"/>
    <property type="evidence" value="ECO:0007669"/>
    <property type="project" value="UniProtKB-KW"/>
</dbReference>
<dbReference type="GO" id="GO:0044027">
    <property type="term" value="P:negative regulation of gene expression via chromosomal CpG island methylation"/>
    <property type="evidence" value="ECO:0007669"/>
    <property type="project" value="TreeGrafter"/>
</dbReference>
<dbReference type="CDD" id="cd04760">
    <property type="entry name" value="BAH_Dnmt1_I"/>
    <property type="match status" value="1"/>
</dbReference>
<dbReference type="FunFam" id="1.10.10.2230:FF:000001">
    <property type="entry name" value="DNA (cytosine-5)-methyltransferase"/>
    <property type="match status" value="1"/>
</dbReference>
<dbReference type="FunFam" id="2.30.30.490:FF:000027">
    <property type="entry name" value="DNA (cytosine-5)-methyltransferase"/>
    <property type="match status" value="1"/>
</dbReference>
<dbReference type="FunFam" id="3.40.50.150:FF:000036">
    <property type="entry name" value="DNA (cytosine-5)-methyltransferase"/>
    <property type="match status" value="1"/>
</dbReference>
<dbReference type="FunFam" id="3.90.120.10:FF:000001">
    <property type="entry name" value="DNA (cytosine-5)-methyltransferase"/>
    <property type="match status" value="1"/>
</dbReference>
<dbReference type="Gene3D" id="1.10.10.2230">
    <property type="match status" value="1"/>
</dbReference>
<dbReference type="Gene3D" id="2.30.30.490">
    <property type="match status" value="2"/>
</dbReference>
<dbReference type="Gene3D" id="3.90.120.10">
    <property type="entry name" value="DNA Methylase, subunit A, domain 2"/>
    <property type="match status" value="1"/>
</dbReference>
<dbReference type="Gene3D" id="3.40.50.150">
    <property type="entry name" value="Vaccinia Virus protein VP39"/>
    <property type="match status" value="1"/>
</dbReference>
<dbReference type="InterPro" id="IPR001025">
    <property type="entry name" value="BAH_dom"/>
</dbReference>
<dbReference type="InterPro" id="IPR043151">
    <property type="entry name" value="BAH_sf"/>
</dbReference>
<dbReference type="InterPro" id="IPR050390">
    <property type="entry name" value="C5-Methyltransferase"/>
</dbReference>
<dbReference type="InterPro" id="IPR018117">
    <property type="entry name" value="C5_DNA_meth_AS"/>
</dbReference>
<dbReference type="InterPro" id="IPR001525">
    <property type="entry name" value="C5_MeTfrase"/>
</dbReference>
<dbReference type="InterPro" id="IPR031303">
    <property type="entry name" value="C5_meth_CS"/>
</dbReference>
<dbReference type="InterPro" id="IPR022702">
    <property type="entry name" value="Cytosine_MeTrfase1_RFD"/>
</dbReference>
<dbReference type="InterPro" id="IPR010506">
    <property type="entry name" value="DMAP1-bd"/>
</dbReference>
<dbReference type="InterPro" id="IPR017198">
    <property type="entry name" value="DNMT1-like"/>
</dbReference>
<dbReference type="InterPro" id="IPR029063">
    <property type="entry name" value="SAM-dependent_MTases_sf"/>
</dbReference>
<dbReference type="InterPro" id="IPR002857">
    <property type="entry name" value="Znf_CXXC"/>
</dbReference>
<dbReference type="NCBIfam" id="TIGR00675">
    <property type="entry name" value="dcm"/>
    <property type="match status" value="1"/>
</dbReference>
<dbReference type="PANTHER" id="PTHR10629">
    <property type="entry name" value="CYTOSINE-SPECIFIC METHYLTRANSFERASE"/>
    <property type="match status" value="1"/>
</dbReference>
<dbReference type="PANTHER" id="PTHR10629:SF52">
    <property type="entry name" value="DNA (CYTOSINE-5)-METHYLTRANSFERASE 1"/>
    <property type="match status" value="1"/>
</dbReference>
<dbReference type="Pfam" id="PF01426">
    <property type="entry name" value="BAH"/>
    <property type="match status" value="2"/>
</dbReference>
<dbReference type="Pfam" id="PF06464">
    <property type="entry name" value="DMAP_binding"/>
    <property type="match status" value="1"/>
</dbReference>
<dbReference type="Pfam" id="PF00145">
    <property type="entry name" value="DNA_methylase"/>
    <property type="match status" value="1"/>
</dbReference>
<dbReference type="Pfam" id="PF12047">
    <property type="entry name" value="DNMT1-RFD"/>
    <property type="match status" value="1"/>
</dbReference>
<dbReference type="Pfam" id="PF02008">
    <property type="entry name" value="zf-CXXC"/>
    <property type="match status" value="1"/>
</dbReference>
<dbReference type="PIRSF" id="PIRSF037404">
    <property type="entry name" value="DNMT1"/>
    <property type="match status" value="1"/>
</dbReference>
<dbReference type="PRINTS" id="PR00105">
    <property type="entry name" value="C5METTRFRASE"/>
</dbReference>
<dbReference type="SMART" id="SM00439">
    <property type="entry name" value="BAH"/>
    <property type="match status" value="2"/>
</dbReference>
<dbReference type="SMART" id="SM01137">
    <property type="entry name" value="DMAP_binding"/>
    <property type="match status" value="1"/>
</dbReference>
<dbReference type="SUPFAM" id="SSF53335">
    <property type="entry name" value="S-adenosyl-L-methionine-dependent methyltransferases"/>
    <property type="match status" value="1"/>
</dbReference>
<dbReference type="PROSITE" id="PS51038">
    <property type="entry name" value="BAH"/>
    <property type="match status" value="2"/>
</dbReference>
<dbReference type="PROSITE" id="PS00094">
    <property type="entry name" value="C5_MTASE_1"/>
    <property type="match status" value="1"/>
</dbReference>
<dbReference type="PROSITE" id="PS00095">
    <property type="entry name" value="C5_MTASE_2"/>
    <property type="match status" value="1"/>
</dbReference>
<dbReference type="PROSITE" id="PS51912">
    <property type="entry name" value="DMAP1_BIND"/>
    <property type="match status" value="1"/>
</dbReference>
<dbReference type="PROSITE" id="PS51679">
    <property type="entry name" value="SAM_MT_C5"/>
    <property type="match status" value="1"/>
</dbReference>
<dbReference type="PROSITE" id="PS51058">
    <property type="entry name" value="ZF_CXXC"/>
    <property type="match status" value="1"/>
</dbReference>
<keyword id="KW-0238">DNA-binding</keyword>
<keyword id="KW-0479">Metal-binding</keyword>
<keyword id="KW-0489">Methyltransferase</keyword>
<keyword id="KW-0539">Nucleus</keyword>
<keyword id="KW-0677">Repeat</keyword>
<keyword id="KW-0949">S-adenosyl-L-methionine</keyword>
<keyword id="KW-0808">Transferase</keyword>
<keyword id="KW-0862">Zinc</keyword>
<keyword id="KW-0863">Zinc-finger</keyword>
<comment type="function">
    <text>Methylates CpG residues.</text>
</comment>
<comment type="catalytic activity">
    <reaction evidence="8">
        <text>a 2'-deoxycytidine in DNA + S-adenosyl-L-methionine = a 5-methyl-2'-deoxycytidine in DNA + S-adenosyl-L-homocysteine + H(+)</text>
        <dbReference type="Rhea" id="RHEA:13681"/>
        <dbReference type="Rhea" id="RHEA-COMP:11369"/>
        <dbReference type="Rhea" id="RHEA-COMP:11370"/>
        <dbReference type="ChEBI" id="CHEBI:15378"/>
        <dbReference type="ChEBI" id="CHEBI:57856"/>
        <dbReference type="ChEBI" id="CHEBI:59789"/>
        <dbReference type="ChEBI" id="CHEBI:85452"/>
        <dbReference type="ChEBI" id="CHEBI:85454"/>
        <dbReference type="EC" id="2.1.1.37"/>
    </reaction>
</comment>
<comment type="subcellular location">
    <subcellularLocation>
        <location evidence="1">Nucleus</location>
    </subcellularLocation>
</comment>
<comment type="similarity">
    <text evidence="6">Belongs to the class I-like SAM-binding methyltransferase superfamily. C5-methyltransferase family.</text>
</comment>
<protein>
    <recommendedName>
        <fullName>DNA (cytosine-5)-methyltransferase PliMCI</fullName>
        <ecNumber>2.1.1.37</ecNumber>
    </recommendedName>
    <alternativeName>
        <fullName>DNA methyltransferase PliMCI</fullName>
        <shortName>DNA MTase PliMCI</shortName>
        <shortName>M.PliMCI</shortName>
    </alternativeName>
    <alternativeName>
        <fullName>Dnmt1</fullName>
    </alternativeName>
    <alternativeName>
        <fullName>MCMT</fullName>
    </alternativeName>
</protein>
<reference key="1">
    <citation type="journal article" date="1996" name="Gene">
        <title>Isolation of cDNA clones encoding DNA methyltransferase of sea urchin P. lividus: expression during embryonic development.</title>
        <authorList>
            <person name="Aniello F."/>
            <person name="Locascio A."/>
            <person name="Fucci L."/>
            <person name="Geraci G."/>
            <person name="Branno M."/>
        </authorList>
    </citation>
    <scope>NUCLEOTIDE SEQUENCE [MRNA]</scope>
    <source>
        <tissue>Embryo</tissue>
    </source>
</reference>
<proteinExistence type="evidence at transcript level"/>
<accession>Q27746</accession>
<gene>
    <name type="primary">DNMT</name>
    <name type="synonym">PLIMCIM</name>
</gene>
<evidence type="ECO:0000250" key="1"/>
<evidence type="ECO:0000250" key="2">
    <source>
        <dbReference type="UniProtKB" id="P13864"/>
    </source>
</evidence>
<evidence type="ECO:0000250" key="3">
    <source>
        <dbReference type="UniProtKB" id="P26358"/>
    </source>
</evidence>
<evidence type="ECO:0000255" key="4">
    <source>
        <dbReference type="PROSITE-ProRule" id="PRU00370"/>
    </source>
</evidence>
<evidence type="ECO:0000255" key="5">
    <source>
        <dbReference type="PROSITE-ProRule" id="PRU00509"/>
    </source>
</evidence>
<evidence type="ECO:0000255" key="6">
    <source>
        <dbReference type="PROSITE-ProRule" id="PRU01016"/>
    </source>
</evidence>
<evidence type="ECO:0000255" key="7">
    <source>
        <dbReference type="PROSITE-ProRule" id="PRU01260"/>
    </source>
</evidence>
<evidence type="ECO:0000255" key="8">
    <source>
        <dbReference type="PROSITE-ProRule" id="PRU10018"/>
    </source>
</evidence>
<evidence type="ECO:0000256" key="9">
    <source>
        <dbReference type="SAM" id="MobiDB-lite"/>
    </source>
</evidence>